<keyword id="KW-0150">Chloroplast</keyword>
<keyword id="KW-0934">Plastid</keyword>
<keyword id="KW-0687">Ribonucleoprotein</keyword>
<keyword id="KW-0689">Ribosomal protein</keyword>
<keyword id="KW-0694">RNA-binding</keyword>
<keyword id="KW-0699">rRNA-binding</keyword>
<evidence type="ECO:0000250" key="1"/>
<evidence type="ECO:0000305" key="2"/>
<proteinExistence type="inferred from homology"/>
<dbReference type="EMBL" id="DQ069459">
    <property type="protein sequence ID" value="AAZ03897.1"/>
    <property type="molecule type" value="Genomic_DNA"/>
</dbReference>
<dbReference type="EMBL" id="DQ354691">
    <property type="protein sequence ID" value="ABC60497.1"/>
    <property type="molecule type" value="Genomic_DNA"/>
</dbReference>
<dbReference type="RefSeq" id="YP_001001573.1">
    <property type="nucleotide sequence ID" value="NC_008788.1"/>
</dbReference>
<dbReference type="SMR" id="Q4FG72"/>
<dbReference type="GeneID" id="4699567"/>
<dbReference type="GO" id="GO:0009507">
    <property type="term" value="C:chloroplast"/>
    <property type="evidence" value="ECO:0007669"/>
    <property type="project" value="UniProtKB-SubCell"/>
</dbReference>
<dbReference type="GO" id="GO:0022627">
    <property type="term" value="C:cytosolic small ribosomal subunit"/>
    <property type="evidence" value="ECO:0007669"/>
    <property type="project" value="TreeGrafter"/>
</dbReference>
<dbReference type="GO" id="GO:0019843">
    <property type="term" value="F:rRNA binding"/>
    <property type="evidence" value="ECO:0007669"/>
    <property type="project" value="UniProtKB-UniRule"/>
</dbReference>
<dbReference type="GO" id="GO:0003735">
    <property type="term" value="F:structural constituent of ribosome"/>
    <property type="evidence" value="ECO:0007669"/>
    <property type="project" value="InterPro"/>
</dbReference>
<dbReference type="GO" id="GO:0006412">
    <property type="term" value="P:translation"/>
    <property type="evidence" value="ECO:0007669"/>
    <property type="project" value="UniProtKB-UniRule"/>
</dbReference>
<dbReference type="CDD" id="cd02412">
    <property type="entry name" value="KH-II_30S_S3"/>
    <property type="match status" value="1"/>
</dbReference>
<dbReference type="FunFam" id="3.30.1140.32:FF:000003">
    <property type="entry name" value="30S ribosomal protein S3, chloroplastic"/>
    <property type="match status" value="1"/>
</dbReference>
<dbReference type="FunFam" id="3.30.300.20:FF:000008">
    <property type="entry name" value="30S ribosomal protein S3, chloroplastic"/>
    <property type="match status" value="1"/>
</dbReference>
<dbReference type="Gene3D" id="3.30.300.20">
    <property type="match status" value="1"/>
</dbReference>
<dbReference type="Gene3D" id="3.30.1140.32">
    <property type="entry name" value="Ribosomal protein S3, C-terminal domain"/>
    <property type="match status" value="1"/>
</dbReference>
<dbReference type="HAMAP" id="MF_01309_B">
    <property type="entry name" value="Ribosomal_uS3_B"/>
    <property type="match status" value="1"/>
</dbReference>
<dbReference type="InterPro" id="IPR015946">
    <property type="entry name" value="KH_dom-like_a/b"/>
</dbReference>
<dbReference type="InterPro" id="IPR004044">
    <property type="entry name" value="KH_dom_type_2"/>
</dbReference>
<dbReference type="InterPro" id="IPR009019">
    <property type="entry name" value="KH_sf_prok-type"/>
</dbReference>
<dbReference type="InterPro" id="IPR036419">
    <property type="entry name" value="Ribosomal_S3_C_sf"/>
</dbReference>
<dbReference type="InterPro" id="IPR005704">
    <property type="entry name" value="Ribosomal_uS3_bac-typ"/>
</dbReference>
<dbReference type="InterPro" id="IPR001351">
    <property type="entry name" value="Ribosomal_uS3_C"/>
</dbReference>
<dbReference type="InterPro" id="IPR018280">
    <property type="entry name" value="Ribosomal_uS3_CS"/>
</dbReference>
<dbReference type="NCBIfam" id="TIGR01009">
    <property type="entry name" value="rpsC_bact"/>
    <property type="match status" value="1"/>
</dbReference>
<dbReference type="PANTHER" id="PTHR11760">
    <property type="entry name" value="30S/40S RIBOSOMAL PROTEIN S3"/>
    <property type="match status" value="1"/>
</dbReference>
<dbReference type="PANTHER" id="PTHR11760:SF19">
    <property type="entry name" value="SMALL RIBOSOMAL SUBUNIT PROTEIN US3C"/>
    <property type="match status" value="1"/>
</dbReference>
<dbReference type="Pfam" id="PF00189">
    <property type="entry name" value="Ribosomal_S3_C"/>
    <property type="match status" value="1"/>
</dbReference>
<dbReference type="SUPFAM" id="SSF54814">
    <property type="entry name" value="Prokaryotic type KH domain (KH-domain type II)"/>
    <property type="match status" value="1"/>
</dbReference>
<dbReference type="SUPFAM" id="SSF54821">
    <property type="entry name" value="Ribosomal protein S3 C-terminal domain"/>
    <property type="match status" value="1"/>
</dbReference>
<dbReference type="PROSITE" id="PS50823">
    <property type="entry name" value="KH_TYPE_2"/>
    <property type="match status" value="1"/>
</dbReference>
<dbReference type="PROSITE" id="PS00548">
    <property type="entry name" value="RIBOSOMAL_S3"/>
    <property type="match status" value="1"/>
</dbReference>
<comment type="subunit">
    <text evidence="1">Part of the 30S ribosomal subunit.</text>
</comment>
<comment type="subcellular location">
    <subcellularLocation>
        <location>Plastid</location>
        <location>Chloroplast</location>
    </subcellularLocation>
</comment>
<comment type="similarity">
    <text evidence="2">Belongs to the universal ribosomal protein uS3 family.</text>
</comment>
<protein>
    <recommendedName>
        <fullName evidence="2">Small ribosomal subunit protein uS3c</fullName>
    </recommendedName>
    <alternativeName>
        <fullName>30S ribosomal protein S3, chloroplastic</fullName>
    </alternativeName>
</protein>
<name>RR3_NUPAD</name>
<organism>
    <name type="scientific">Nuphar advena</name>
    <name type="common">Common spatterdock</name>
    <name type="synonym">Nuphar lutea subsp. advena</name>
    <dbReference type="NCBI Taxonomy" id="77108"/>
    <lineage>
        <taxon>Eukaryota</taxon>
        <taxon>Viridiplantae</taxon>
        <taxon>Streptophyta</taxon>
        <taxon>Embryophyta</taxon>
        <taxon>Tracheophyta</taxon>
        <taxon>Spermatophyta</taxon>
        <taxon>Magnoliopsida</taxon>
        <taxon>Nymphaeales</taxon>
        <taxon>Nymphaeaceae</taxon>
        <taxon>Nuphar</taxon>
    </lineage>
</organism>
<gene>
    <name type="primary">rps3</name>
</gene>
<geneLocation type="chloroplast"/>
<accession>Q4FG72</accession>
<feature type="chain" id="PRO_0000293950" description="Small ribosomal subunit protein uS3c">
    <location>
        <begin position="1"/>
        <end position="218"/>
    </location>
</feature>
<feature type="domain" description="KH type-2">
    <location>
        <begin position="47"/>
        <end position="118"/>
    </location>
</feature>
<sequence length="218" mass="25103">MGQKINPLGFRLGTTQSHRSFWFAQPKNYSKGLQEDEKIRDCIKNYVQKHMRISSGFEGIARIDIKKRIDLIQVIIHIGFANMLIEGRARGIEELQTNVQKSFHSVNRRLNIAIARVPRPYGQPNILAEYIALQLKNRVSFRKAMKKAIELAEQADAKGIQVQIAGRLNGNEIARVEWIREGRVPLQTIRVKIDHCSYPVRTIYGVLGIKIWIFLDEE</sequence>
<reference key="1">
    <citation type="journal article" date="2005" name="Mol. Biol. Evol.">
        <title>Identifying the basal angiosperm node in chloroplast genome phylogenies: sampling one's way out of the Felsenstein zone.</title>
        <authorList>
            <person name="Leebens-Mack J."/>
            <person name="Raubeson L.A."/>
            <person name="Cui L."/>
            <person name="Kuehl J.V."/>
            <person name="Fourcade M.H."/>
            <person name="Chumley T.W."/>
            <person name="Boore J.L."/>
            <person name="Jansen R.K."/>
            <person name="dePamphilis C.W."/>
        </authorList>
    </citation>
    <scope>NUCLEOTIDE SEQUENCE [GENOMIC DNA]</scope>
</reference>
<reference key="2">
    <citation type="journal article" date="2007" name="BMC Genomics">
        <title>Comparative chloroplast genomics: analyses including new sequences from the angiosperms Nuphar advena and Ranunculus macranthus.</title>
        <authorList>
            <person name="Raubeson L.A."/>
            <person name="Peery R."/>
            <person name="Chumley T.W."/>
            <person name="Dziubek C."/>
            <person name="Fourcade H.M."/>
            <person name="Boore J.L."/>
            <person name="Jansen R.K."/>
        </authorList>
    </citation>
    <scope>NUCLEOTIDE SEQUENCE [LARGE SCALE GENOMIC DNA]</scope>
</reference>